<accession>P17420</accession>
<proteinExistence type="predicted"/>
<dbReference type="EMBL" id="X52389">
    <property type="status" value="NOT_ANNOTATED_CDS"/>
    <property type="molecule type" value="Genomic_DNA"/>
</dbReference>
<dbReference type="PIR" id="S15256">
    <property type="entry name" value="S15256"/>
</dbReference>
<dbReference type="SMR" id="P17420"/>
<dbReference type="Gene3D" id="3.40.710.10">
    <property type="entry name" value="DD-peptidase/beta-lactamase superfamily"/>
    <property type="match status" value="1"/>
</dbReference>
<dbReference type="InterPro" id="IPR001466">
    <property type="entry name" value="Beta-lactam-related"/>
</dbReference>
<dbReference type="InterPro" id="IPR012338">
    <property type="entry name" value="Beta-lactam/transpept-like"/>
</dbReference>
<dbReference type="InterPro" id="IPR023650">
    <property type="entry name" value="Beta-lactam_class-A_AS"/>
</dbReference>
<dbReference type="InterPro" id="IPR050789">
    <property type="entry name" value="Diverse_Enzym_Activities"/>
</dbReference>
<dbReference type="PANTHER" id="PTHR43283:SF3">
    <property type="entry name" value="BETA-LACTAMASE FAMILY PROTEIN (AFU_ORTHOLOGUE AFUA_5G07500)"/>
    <property type="match status" value="1"/>
</dbReference>
<dbReference type="PANTHER" id="PTHR43283">
    <property type="entry name" value="BETA-LACTAMASE-RELATED"/>
    <property type="match status" value="1"/>
</dbReference>
<dbReference type="Pfam" id="PF00144">
    <property type="entry name" value="Beta-lactamase"/>
    <property type="match status" value="1"/>
</dbReference>
<dbReference type="SUPFAM" id="SSF56601">
    <property type="entry name" value="beta-lactamase/transpeptidase-like"/>
    <property type="match status" value="1"/>
</dbReference>
<dbReference type="PROSITE" id="PS00146">
    <property type="entry name" value="BETA_LACTAMASE_A"/>
    <property type="match status" value="1"/>
</dbReference>
<protein>
    <recommendedName>
        <fullName>Putative fimbrial assembly protein FimD, serogroup D</fullName>
    </recommendedName>
</protein>
<feature type="chain" id="PRO_0000087253" description="Putative fimbrial assembly protein FimD, serogroup D">
    <location>
        <begin position="1"/>
        <end position="394"/>
    </location>
</feature>
<reference key="1">
    <citation type="journal article" date="1991" name="Mol. Microbiol.">
        <title>Organization of the fimbrial gene region of Bacteroides nodosus: class I and class II strains.</title>
        <authorList>
            <person name="Hobbs M."/>
            <person name="Dalrymple B.P."/>
            <person name="Cox P.T."/>
            <person name="Livingstone S.P."/>
            <person name="Delaney S.F."/>
            <person name="Mattick J.S."/>
        </authorList>
    </citation>
    <scope>NUCLEOTIDE SEQUENCE [GENOMIC DNA]</scope>
    <source>
        <strain>Serogroup D isolate VCS1172</strain>
    </source>
</reference>
<organism>
    <name type="scientific">Dichelobacter nodosus</name>
    <name type="common">Bacteroides nodosus</name>
    <dbReference type="NCBI Taxonomy" id="870"/>
    <lineage>
        <taxon>Bacteria</taxon>
        <taxon>Pseudomonadati</taxon>
        <taxon>Pseudomonadota</taxon>
        <taxon>Gammaproteobacteria</taxon>
        <taxon>Cardiobacteriales</taxon>
        <taxon>Cardiobacteriaceae</taxon>
        <taxon>Dichelobacter</taxon>
    </lineage>
</organism>
<sequence>MFKKFLWRDCVFIIVLITAIALPAYIHTNYPQAFSRFFYPVEAWFTKRDLRCSKNAPHFLRQLLIEMIDEQKSLNNQVAFWHNGQLFHCESGWEDGFRGEKPMRVNSRFRYASVTKVLTSALVLHAINEQKLSLDSKIIELLELPAPKDPRVAAITIKMLLEHSAGFDRLKTYMPMLTMDVKPWCPTNLAQLSKTKLDFDPETQFQYSNVGYCLLGAAIEKAYGRTFQSVAEDYFQLKKYGIAFVGDRFLPDEIQYDYRFESFYSEFYLKHFDFKDSLYAVGGLSGSAADIVQLLAALPKEAPLTIFSHNHTPCSINMLDACYGYALQPYQASGQSYTLWGKSGFFPGVNTDVFLDEQGNILATLRAASAKKTADTLLLRQYAYSLMNEYVNQK</sequence>
<name>FIMDD_DICNO</name>
<gene>
    <name type="primary">fimD</name>
</gene>
<keyword id="KW-1029">Fimbrium biogenesis</keyword>